<reference key="1">
    <citation type="journal article" date="1997" name="Plant Mol. Biol.">
        <title>Molecular characterization of the AP19 gene family in Arabidopsis thaliana: components of the Golgi AP-1 clathrin assembly protein complex.</title>
        <authorList>
            <person name="Maldonado-Mendoza I.E."/>
            <person name="Nessler C.L."/>
        </authorList>
    </citation>
    <scope>NUCLEOTIDE SEQUENCE [MRNA]</scope>
    <scope>TISSUE SPECIFICITY</scope>
    <source>
        <strain>cv. Landsberg erecta</strain>
        <tissue>Leaf</tissue>
    </source>
</reference>
<reference key="2">
    <citation type="journal article" date="1999" name="Nature">
        <title>Sequence and analysis of chromosome 4 of the plant Arabidopsis thaliana.</title>
        <authorList>
            <person name="Mayer K.F.X."/>
            <person name="Schueller C."/>
            <person name="Wambutt R."/>
            <person name="Murphy G."/>
            <person name="Volckaert G."/>
            <person name="Pohl T."/>
            <person name="Duesterhoeft A."/>
            <person name="Stiekema W."/>
            <person name="Entian K.-D."/>
            <person name="Terryn N."/>
            <person name="Harris B."/>
            <person name="Ansorge W."/>
            <person name="Brandt P."/>
            <person name="Grivell L.A."/>
            <person name="Rieger M."/>
            <person name="Weichselgartner M."/>
            <person name="de Simone V."/>
            <person name="Obermaier B."/>
            <person name="Mache R."/>
            <person name="Mueller M."/>
            <person name="Kreis M."/>
            <person name="Delseny M."/>
            <person name="Puigdomenech P."/>
            <person name="Watson M."/>
            <person name="Schmidtheini T."/>
            <person name="Reichert B."/>
            <person name="Portetelle D."/>
            <person name="Perez-Alonso M."/>
            <person name="Boutry M."/>
            <person name="Bancroft I."/>
            <person name="Vos P."/>
            <person name="Hoheisel J."/>
            <person name="Zimmermann W."/>
            <person name="Wedler H."/>
            <person name="Ridley P."/>
            <person name="Langham S.-A."/>
            <person name="McCullagh B."/>
            <person name="Bilham L."/>
            <person name="Robben J."/>
            <person name="van der Schueren J."/>
            <person name="Grymonprez B."/>
            <person name="Chuang Y.-J."/>
            <person name="Vandenbussche F."/>
            <person name="Braeken M."/>
            <person name="Weltjens I."/>
            <person name="Voet M."/>
            <person name="Bastiaens I."/>
            <person name="Aert R."/>
            <person name="Defoor E."/>
            <person name="Weitzenegger T."/>
            <person name="Bothe G."/>
            <person name="Ramsperger U."/>
            <person name="Hilbert H."/>
            <person name="Braun M."/>
            <person name="Holzer E."/>
            <person name="Brandt A."/>
            <person name="Peters S."/>
            <person name="van Staveren M."/>
            <person name="Dirkse W."/>
            <person name="Mooijman P."/>
            <person name="Klein Lankhorst R."/>
            <person name="Rose M."/>
            <person name="Hauf J."/>
            <person name="Koetter P."/>
            <person name="Berneiser S."/>
            <person name="Hempel S."/>
            <person name="Feldpausch M."/>
            <person name="Lamberth S."/>
            <person name="Van den Daele H."/>
            <person name="De Keyser A."/>
            <person name="Buysshaert C."/>
            <person name="Gielen J."/>
            <person name="Villarroel R."/>
            <person name="De Clercq R."/>
            <person name="van Montagu M."/>
            <person name="Rogers J."/>
            <person name="Cronin A."/>
            <person name="Quail M.A."/>
            <person name="Bray-Allen S."/>
            <person name="Clark L."/>
            <person name="Doggett J."/>
            <person name="Hall S."/>
            <person name="Kay M."/>
            <person name="Lennard N."/>
            <person name="McLay K."/>
            <person name="Mayes R."/>
            <person name="Pettett A."/>
            <person name="Rajandream M.A."/>
            <person name="Lyne M."/>
            <person name="Benes V."/>
            <person name="Rechmann S."/>
            <person name="Borkova D."/>
            <person name="Bloecker H."/>
            <person name="Scharfe M."/>
            <person name="Grimm M."/>
            <person name="Loehnert T.-H."/>
            <person name="Dose S."/>
            <person name="de Haan M."/>
            <person name="Maarse A.C."/>
            <person name="Schaefer M."/>
            <person name="Mueller-Auer S."/>
            <person name="Gabel C."/>
            <person name="Fuchs M."/>
            <person name="Fartmann B."/>
            <person name="Granderath K."/>
            <person name="Dauner D."/>
            <person name="Herzl A."/>
            <person name="Neumann S."/>
            <person name="Argiriou A."/>
            <person name="Vitale D."/>
            <person name="Liguori R."/>
            <person name="Piravandi E."/>
            <person name="Massenet O."/>
            <person name="Quigley F."/>
            <person name="Clabauld G."/>
            <person name="Muendlein A."/>
            <person name="Felber R."/>
            <person name="Schnabl S."/>
            <person name="Hiller R."/>
            <person name="Schmidt W."/>
            <person name="Lecharny A."/>
            <person name="Aubourg S."/>
            <person name="Chefdor F."/>
            <person name="Cooke R."/>
            <person name="Berger C."/>
            <person name="Monfort A."/>
            <person name="Casacuberta E."/>
            <person name="Gibbons T."/>
            <person name="Weber N."/>
            <person name="Vandenbol M."/>
            <person name="Bargues M."/>
            <person name="Terol J."/>
            <person name="Torres A."/>
            <person name="Perez-Perez A."/>
            <person name="Purnelle B."/>
            <person name="Bent E."/>
            <person name="Johnson S."/>
            <person name="Tacon D."/>
            <person name="Jesse T."/>
            <person name="Heijnen L."/>
            <person name="Schwarz S."/>
            <person name="Scholler P."/>
            <person name="Heber S."/>
            <person name="Francs P."/>
            <person name="Bielke C."/>
            <person name="Frishman D."/>
            <person name="Haase D."/>
            <person name="Lemcke K."/>
            <person name="Mewes H.-W."/>
            <person name="Stocker S."/>
            <person name="Zaccaria P."/>
            <person name="Bevan M."/>
            <person name="Wilson R.K."/>
            <person name="de la Bastide M."/>
            <person name="Habermann K."/>
            <person name="Parnell L."/>
            <person name="Dedhia N."/>
            <person name="Gnoj L."/>
            <person name="Schutz K."/>
            <person name="Huang E."/>
            <person name="Spiegel L."/>
            <person name="Sekhon M."/>
            <person name="Murray J."/>
            <person name="Sheet P."/>
            <person name="Cordes M."/>
            <person name="Abu-Threideh J."/>
            <person name="Stoneking T."/>
            <person name="Kalicki J."/>
            <person name="Graves T."/>
            <person name="Harmon G."/>
            <person name="Edwards J."/>
            <person name="Latreille P."/>
            <person name="Courtney L."/>
            <person name="Cloud J."/>
            <person name="Abbott A."/>
            <person name="Scott K."/>
            <person name="Johnson D."/>
            <person name="Minx P."/>
            <person name="Bentley D."/>
            <person name="Fulton B."/>
            <person name="Miller N."/>
            <person name="Greco T."/>
            <person name="Kemp K."/>
            <person name="Kramer J."/>
            <person name="Fulton L."/>
            <person name="Mardis E."/>
            <person name="Dante M."/>
            <person name="Pepin K."/>
            <person name="Hillier L.W."/>
            <person name="Nelson J."/>
            <person name="Spieth J."/>
            <person name="Ryan E."/>
            <person name="Andrews S."/>
            <person name="Geisel C."/>
            <person name="Layman D."/>
            <person name="Du H."/>
            <person name="Ali J."/>
            <person name="Berghoff A."/>
            <person name="Jones K."/>
            <person name="Drone K."/>
            <person name="Cotton M."/>
            <person name="Joshu C."/>
            <person name="Antonoiu B."/>
            <person name="Zidanic M."/>
            <person name="Strong C."/>
            <person name="Sun H."/>
            <person name="Lamar B."/>
            <person name="Yordan C."/>
            <person name="Ma P."/>
            <person name="Zhong J."/>
            <person name="Preston R."/>
            <person name="Vil D."/>
            <person name="Shekher M."/>
            <person name="Matero A."/>
            <person name="Shah R."/>
            <person name="Swaby I.K."/>
            <person name="O'Shaughnessy A."/>
            <person name="Rodriguez M."/>
            <person name="Hoffman J."/>
            <person name="Till S."/>
            <person name="Granat S."/>
            <person name="Shohdy N."/>
            <person name="Hasegawa A."/>
            <person name="Hameed A."/>
            <person name="Lodhi M."/>
            <person name="Johnson A."/>
            <person name="Chen E."/>
            <person name="Marra M.A."/>
            <person name="Martienssen R."/>
            <person name="McCombie W.R."/>
        </authorList>
    </citation>
    <scope>NUCLEOTIDE SEQUENCE [LARGE SCALE GENOMIC DNA]</scope>
    <source>
        <strain>cv. Columbia</strain>
    </source>
</reference>
<reference key="3">
    <citation type="journal article" date="2017" name="Plant J.">
        <title>Araport11: a complete reannotation of the Arabidopsis thaliana reference genome.</title>
        <authorList>
            <person name="Cheng C.Y."/>
            <person name="Krishnakumar V."/>
            <person name="Chan A.P."/>
            <person name="Thibaud-Nissen F."/>
            <person name="Schobel S."/>
            <person name="Town C.D."/>
        </authorList>
    </citation>
    <scope>GENOME REANNOTATION</scope>
    <source>
        <strain>cv. Columbia</strain>
    </source>
</reference>
<reference key="4">
    <citation type="journal article" date="2002" name="Science">
        <title>Functional annotation of a full-length Arabidopsis cDNA collection.</title>
        <authorList>
            <person name="Seki M."/>
            <person name="Narusaka M."/>
            <person name="Kamiya A."/>
            <person name="Ishida J."/>
            <person name="Satou M."/>
            <person name="Sakurai T."/>
            <person name="Nakajima M."/>
            <person name="Enju A."/>
            <person name="Akiyama K."/>
            <person name="Oono Y."/>
            <person name="Muramatsu M."/>
            <person name="Hayashizaki Y."/>
            <person name="Kawai J."/>
            <person name="Carninci P."/>
            <person name="Itoh M."/>
            <person name="Ishii Y."/>
            <person name="Arakawa T."/>
            <person name="Shibata K."/>
            <person name="Shinagawa A."/>
            <person name="Shinozaki K."/>
        </authorList>
    </citation>
    <scope>NUCLEOTIDE SEQUENCE [LARGE SCALE MRNA]</scope>
    <source>
        <strain>cv. Columbia</strain>
    </source>
</reference>
<reference key="5">
    <citation type="journal article" date="2003" name="Science">
        <title>Empirical analysis of transcriptional activity in the Arabidopsis genome.</title>
        <authorList>
            <person name="Yamada K."/>
            <person name="Lim J."/>
            <person name="Dale J.M."/>
            <person name="Chen H."/>
            <person name="Shinn P."/>
            <person name="Palm C.J."/>
            <person name="Southwick A.M."/>
            <person name="Wu H.C."/>
            <person name="Kim C.J."/>
            <person name="Nguyen M."/>
            <person name="Pham P.K."/>
            <person name="Cheuk R.F."/>
            <person name="Karlin-Newmann G."/>
            <person name="Liu S.X."/>
            <person name="Lam B."/>
            <person name="Sakano H."/>
            <person name="Wu T."/>
            <person name="Yu G."/>
            <person name="Miranda M."/>
            <person name="Quach H.L."/>
            <person name="Tripp M."/>
            <person name="Chang C.H."/>
            <person name="Lee J.M."/>
            <person name="Toriumi M.J."/>
            <person name="Chan M.M."/>
            <person name="Tang C.C."/>
            <person name="Onodera C.S."/>
            <person name="Deng J.M."/>
            <person name="Akiyama K."/>
            <person name="Ansari Y."/>
            <person name="Arakawa T."/>
            <person name="Banh J."/>
            <person name="Banno F."/>
            <person name="Bowser L."/>
            <person name="Brooks S.Y."/>
            <person name="Carninci P."/>
            <person name="Chao Q."/>
            <person name="Choy N."/>
            <person name="Enju A."/>
            <person name="Goldsmith A.D."/>
            <person name="Gurjal M."/>
            <person name="Hansen N.F."/>
            <person name="Hayashizaki Y."/>
            <person name="Johnson-Hopson C."/>
            <person name="Hsuan V.W."/>
            <person name="Iida K."/>
            <person name="Karnes M."/>
            <person name="Khan S."/>
            <person name="Koesema E."/>
            <person name="Ishida J."/>
            <person name="Jiang P.X."/>
            <person name="Jones T."/>
            <person name="Kawai J."/>
            <person name="Kamiya A."/>
            <person name="Meyers C."/>
            <person name="Nakajima M."/>
            <person name="Narusaka M."/>
            <person name="Seki M."/>
            <person name="Sakurai T."/>
            <person name="Satou M."/>
            <person name="Tamse R."/>
            <person name="Vaysberg M."/>
            <person name="Wallender E.K."/>
            <person name="Wong C."/>
            <person name="Yamamura Y."/>
            <person name="Yuan S."/>
            <person name="Shinozaki K."/>
            <person name="Davis R.W."/>
            <person name="Theologis A."/>
            <person name="Ecker J.R."/>
        </authorList>
    </citation>
    <scope>NUCLEOTIDE SEQUENCE [LARGE SCALE MRNA]</scope>
    <source>
        <strain>cv. Columbia</strain>
    </source>
</reference>
<reference key="6">
    <citation type="submission" date="2002-03" db="EMBL/GenBank/DDBJ databases">
        <title>Full-length cDNA from Arabidopsis thaliana.</title>
        <authorList>
            <person name="Brover V.V."/>
            <person name="Troukhan M.E."/>
            <person name="Alexandrov N.A."/>
            <person name="Lu Y.-P."/>
            <person name="Flavell R.B."/>
            <person name="Feldmann K.A."/>
        </authorList>
    </citation>
    <scope>NUCLEOTIDE SEQUENCE [LARGE SCALE MRNA]</scope>
</reference>
<reference key="7">
    <citation type="journal article" date="2001" name="Mol. Biol. Cell">
        <title>Adaptins: the final recount.</title>
        <authorList>
            <person name="Boehm M."/>
            <person name="Bonifacino J.S."/>
        </authorList>
    </citation>
    <scope>GENE FAMILY</scope>
    <scope>REVIEW</scope>
</reference>
<accession>O23685</accession>
<organism>
    <name type="scientific">Arabidopsis thaliana</name>
    <name type="common">Mouse-ear cress</name>
    <dbReference type="NCBI Taxonomy" id="3702"/>
    <lineage>
        <taxon>Eukaryota</taxon>
        <taxon>Viridiplantae</taxon>
        <taxon>Streptophyta</taxon>
        <taxon>Embryophyta</taxon>
        <taxon>Tracheophyta</taxon>
        <taxon>Spermatophyta</taxon>
        <taxon>Magnoliopsida</taxon>
        <taxon>eudicotyledons</taxon>
        <taxon>Gunneridae</taxon>
        <taxon>Pentapetalae</taxon>
        <taxon>rosids</taxon>
        <taxon>malvids</taxon>
        <taxon>Brassicales</taxon>
        <taxon>Brassicaceae</taxon>
        <taxon>Camelineae</taxon>
        <taxon>Arabidopsis</taxon>
    </lineage>
</organism>
<evidence type="ECO:0000250" key="1"/>
<evidence type="ECO:0000269" key="2">
    <source>
    </source>
</evidence>
<evidence type="ECO:0000305" key="3"/>
<protein>
    <recommendedName>
        <fullName>AP-1 complex subunit sigma-2</fullName>
    </recommendedName>
    <alternativeName>
        <fullName>Adaptor AP-1 19 kDa protein</fullName>
    </alternativeName>
    <alternativeName>
        <fullName>Adaptor protein complex AP-1 sigma-2 subunit</fullName>
    </alternativeName>
    <alternativeName>
        <fullName>Adaptor-related protein complex 1 sigma-2 subunit</fullName>
    </alternativeName>
    <alternativeName>
        <fullName>Clathrin assembly protein complex 1 sigma-2 small chain</fullName>
    </alternativeName>
    <alternativeName>
        <fullName>Clathrin assembly small subunit protein AP19-2</fullName>
        <shortName>AtAP19-2</shortName>
    </alternativeName>
    <alternativeName>
        <fullName>Sigma 2 subunit of AP-1 clathrin</fullName>
    </alternativeName>
    <alternativeName>
        <fullName>Sigma-adaptin 2</fullName>
    </alternativeName>
    <alternativeName>
        <fullName>Sigma2-adaptin</fullName>
    </alternativeName>
</protein>
<dbReference type="EMBL" id="U92086">
    <property type="protein sequence ID" value="AAB96889.1"/>
    <property type="molecule type" value="Genomic_DNA"/>
</dbReference>
<dbReference type="EMBL" id="AL022604">
    <property type="protein sequence ID" value="CAA18728.1"/>
    <property type="molecule type" value="Genomic_DNA"/>
</dbReference>
<dbReference type="EMBL" id="AL161587">
    <property type="protein sequence ID" value="CAB80258.1"/>
    <property type="molecule type" value="Genomic_DNA"/>
</dbReference>
<dbReference type="EMBL" id="CP002687">
    <property type="protein sequence ID" value="AEE86507.1"/>
    <property type="molecule type" value="Genomic_DNA"/>
</dbReference>
<dbReference type="EMBL" id="AK119004">
    <property type="protein sequence ID" value="BAC43580.1"/>
    <property type="molecule type" value="mRNA"/>
</dbReference>
<dbReference type="EMBL" id="BT004964">
    <property type="protein sequence ID" value="AAO50497.1"/>
    <property type="molecule type" value="mRNA"/>
</dbReference>
<dbReference type="EMBL" id="AY086242">
    <property type="protein sequence ID" value="AAM64317.1"/>
    <property type="molecule type" value="mRNA"/>
</dbReference>
<dbReference type="PIR" id="T06116">
    <property type="entry name" value="T06116"/>
</dbReference>
<dbReference type="RefSeq" id="NP_195267.1">
    <molecule id="O23685-1"/>
    <property type="nucleotide sequence ID" value="NM_119707.4"/>
</dbReference>
<dbReference type="SMR" id="O23685"/>
<dbReference type="BioGRID" id="14976">
    <property type="interactions" value="9"/>
</dbReference>
<dbReference type="FunCoup" id="O23685">
    <property type="interactions" value="2751"/>
</dbReference>
<dbReference type="STRING" id="3702.O23685"/>
<dbReference type="PaxDb" id="3702-AT4G35410.2"/>
<dbReference type="ProteomicsDB" id="244976">
    <molecule id="O23685-1"/>
</dbReference>
<dbReference type="EnsemblPlants" id="AT4G35410.2">
    <molecule id="O23685-1"/>
    <property type="protein sequence ID" value="AT4G35410.2"/>
    <property type="gene ID" value="AT4G35410"/>
</dbReference>
<dbReference type="GeneID" id="829694"/>
<dbReference type="Gramene" id="AT4G35410.2">
    <molecule id="O23685-1"/>
    <property type="protein sequence ID" value="AT4G35410.2"/>
    <property type="gene ID" value="AT4G35410"/>
</dbReference>
<dbReference type="KEGG" id="ath:AT4G35410"/>
<dbReference type="Araport" id="AT4G35410"/>
<dbReference type="TAIR" id="AT4G35410"/>
<dbReference type="eggNOG" id="KOG0934">
    <property type="taxonomic scope" value="Eukaryota"/>
</dbReference>
<dbReference type="HOGENOM" id="CLU_061221_1_3_1"/>
<dbReference type="InParanoid" id="O23685"/>
<dbReference type="OMA" id="KAYHILD"/>
<dbReference type="PhylomeDB" id="O23685"/>
<dbReference type="PRO" id="PR:O23685"/>
<dbReference type="Proteomes" id="UP000006548">
    <property type="component" value="Chromosome 4"/>
</dbReference>
<dbReference type="ExpressionAtlas" id="O23685">
    <property type="expression patterns" value="baseline and differential"/>
</dbReference>
<dbReference type="GO" id="GO:0030121">
    <property type="term" value="C:AP-1 adaptor complex"/>
    <property type="evidence" value="ECO:0007669"/>
    <property type="project" value="InterPro"/>
</dbReference>
<dbReference type="GO" id="GO:0035615">
    <property type="term" value="F:clathrin adaptor activity"/>
    <property type="evidence" value="ECO:0007669"/>
    <property type="project" value="InterPro"/>
</dbReference>
<dbReference type="GO" id="GO:0006886">
    <property type="term" value="P:intracellular protein transport"/>
    <property type="evidence" value="ECO:0007669"/>
    <property type="project" value="InterPro"/>
</dbReference>
<dbReference type="CDD" id="cd14831">
    <property type="entry name" value="AP1_sigma"/>
    <property type="match status" value="1"/>
</dbReference>
<dbReference type="FunFam" id="3.30.450.60:FF:000007">
    <property type="entry name" value="AP complex subunit sigma"/>
    <property type="match status" value="1"/>
</dbReference>
<dbReference type="Gene3D" id="3.30.450.60">
    <property type="match status" value="1"/>
</dbReference>
<dbReference type="InterPro" id="IPR044733">
    <property type="entry name" value="AP1_sigma"/>
</dbReference>
<dbReference type="InterPro" id="IPR016635">
    <property type="entry name" value="AP_complex_ssu"/>
</dbReference>
<dbReference type="InterPro" id="IPR022775">
    <property type="entry name" value="AP_mu_sigma_su"/>
</dbReference>
<dbReference type="InterPro" id="IPR000804">
    <property type="entry name" value="Clathrin_sm-chain_CS"/>
</dbReference>
<dbReference type="InterPro" id="IPR011012">
    <property type="entry name" value="Longin-like_dom_sf"/>
</dbReference>
<dbReference type="PANTHER" id="PTHR11753">
    <property type="entry name" value="ADAPTOR COMPLEXES SMALL SUBUNIT FAMILY"/>
    <property type="match status" value="1"/>
</dbReference>
<dbReference type="Pfam" id="PF01217">
    <property type="entry name" value="Clat_adaptor_s"/>
    <property type="match status" value="1"/>
</dbReference>
<dbReference type="PIRSF" id="PIRSF015588">
    <property type="entry name" value="AP_complex_sigma"/>
    <property type="match status" value="1"/>
</dbReference>
<dbReference type="SUPFAM" id="SSF64356">
    <property type="entry name" value="SNARE-like"/>
    <property type="match status" value="1"/>
</dbReference>
<dbReference type="PROSITE" id="PS00989">
    <property type="entry name" value="CLAT_ADAPTOR_S"/>
    <property type="match status" value="1"/>
</dbReference>
<feature type="chain" id="PRO_0000397857" description="AP-1 complex subunit sigma-2">
    <location>
        <begin position="1"/>
        <end position="162"/>
    </location>
</feature>
<gene>
    <name type="primary">AAP19-2</name>
    <name type="ordered locus">At4g35410</name>
    <name type="ORF">F23E12.30</name>
</gene>
<keyword id="KW-0025">Alternative splicing</keyword>
<keyword id="KW-0968">Cytoplasmic vesicle</keyword>
<keyword id="KW-0333">Golgi apparatus</keyword>
<keyword id="KW-0472">Membrane</keyword>
<keyword id="KW-0653">Protein transport</keyword>
<keyword id="KW-1185">Reference proteome</keyword>
<keyword id="KW-0813">Transport</keyword>
<name>AP1S2_ARATH</name>
<sequence>MIHFVLLVSRQGKVRLTKWYSPYAQKERSKVIRELSGVILNRGPKLCNFVEWRGYKVVYKRYASLYFCMCIDQEDNELEVLEIIHHYVEILDRYFGSVCELDLIFNFHKAYYILDELLIAGELQESSKKTVARIISAQDQLVEVAKEEASSISNIIAQATNR</sequence>
<comment type="function">
    <text evidence="1">Subunit of clathrin-associated adaptor protein complex 1 that plays a role in protein sorting at the trans-Golgi network and early endosomes (TGN/EE). The AP complexes mediate the recruitment of clathrin to membranes and the recognition of sorting signals within the cytosolic tails of transmembrane cargo molecules (By similarity).</text>
</comment>
<comment type="subunit">
    <text evidence="1">Adaptor protein complex 1 (AP-1) is a heterotetramer composed of two large adaptins (gamma-type subunit and beta-type subunit), a medium adaptin (mu-type subunit) and a small adaptin (sigma-type subunit).</text>
</comment>
<comment type="subcellular location">
    <subcellularLocation>
        <location evidence="1">Golgi apparatus</location>
    </subcellularLocation>
    <subcellularLocation>
        <location evidence="1">Cytoplasmic vesicle</location>
        <location evidence="1">Clathrin-coated vesicle membrane</location>
        <topology evidence="1">Peripheral membrane protein</topology>
        <orientation evidence="1">Cytoplasmic side</orientation>
    </subcellularLocation>
</comment>
<comment type="alternative products">
    <event type="alternative splicing"/>
    <isoform>
        <id>O23685-1</id>
        <name>1</name>
        <sequence type="displayed"/>
    </isoform>
    <text>A number of isoforms are produced. According to EST sequences.</text>
</comment>
<comment type="tissue specificity">
    <text evidence="2">Expressed in roots, stems, leaves, flowers and siliques (developing fruits and seeds).</text>
</comment>
<comment type="similarity">
    <text evidence="3">Belongs to the adaptor complexes small subunit family.</text>
</comment>
<proteinExistence type="evidence at transcript level"/>